<feature type="chain" id="PRO_1000143937" description="Large ribosomal subunit protein uL6">
    <location>
        <begin position="1"/>
        <end position="177"/>
    </location>
</feature>
<evidence type="ECO:0000255" key="1">
    <source>
        <dbReference type="HAMAP-Rule" id="MF_01365"/>
    </source>
</evidence>
<evidence type="ECO:0000305" key="2"/>
<sequence length="177" mass="18873">MSRVAKAPVNIPAGVEVKLNGQLLTVKGKNGELSREIHNAVEVNQDANALTFVPRTGVANADAQAGTARALVNAMVIGVTEGFTKKLQLVGVGYRAQMKGNVVALSLGYSHPIEHTLPAGVTGECPSQTEIVLKSADKQLIGQVAADIRAYRRPEPYKGKGVRYSDEVVRTKEAKKK</sequence>
<gene>
    <name evidence="1" type="primary">rplF</name>
    <name type="ordered locus">APJL_1810</name>
</gene>
<proteinExistence type="inferred from homology"/>
<comment type="function">
    <text evidence="1">This protein binds to the 23S rRNA, and is important in its secondary structure. It is located near the subunit interface in the base of the L7/L12 stalk, and near the tRNA binding site of the peptidyltransferase center.</text>
</comment>
<comment type="subunit">
    <text evidence="1">Part of the 50S ribosomal subunit.</text>
</comment>
<comment type="similarity">
    <text evidence="1">Belongs to the universal ribosomal protein uL6 family.</text>
</comment>
<protein>
    <recommendedName>
        <fullName evidence="1">Large ribosomal subunit protein uL6</fullName>
    </recommendedName>
    <alternativeName>
        <fullName evidence="2">50S ribosomal protein L6</fullName>
    </alternativeName>
</protein>
<reference key="1">
    <citation type="journal article" date="2008" name="PLoS ONE">
        <title>Genome biology of Actinobacillus pleuropneumoniae JL03, an isolate of serotype 3 prevalent in China.</title>
        <authorList>
            <person name="Xu Z."/>
            <person name="Zhou Y."/>
            <person name="Li L."/>
            <person name="Zhou R."/>
            <person name="Xiao S."/>
            <person name="Wan Y."/>
            <person name="Zhang S."/>
            <person name="Wang K."/>
            <person name="Li W."/>
            <person name="Li L."/>
            <person name="Jin H."/>
            <person name="Kang M."/>
            <person name="Dalai B."/>
            <person name="Li T."/>
            <person name="Liu L."/>
            <person name="Cheng Y."/>
            <person name="Zhang L."/>
            <person name="Xu T."/>
            <person name="Zheng H."/>
            <person name="Pu S."/>
            <person name="Wang B."/>
            <person name="Gu W."/>
            <person name="Zhang X.L."/>
            <person name="Zhu G.-F."/>
            <person name="Wang S."/>
            <person name="Zhao G.-P."/>
            <person name="Chen H."/>
        </authorList>
    </citation>
    <scope>NUCLEOTIDE SEQUENCE [LARGE SCALE GENOMIC DNA]</scope>
    <source>
        <strain>JL03</strain>
    </source>
</reference>
<name>RL6_ACTPJ</name>
<dbReference type="EMBL" id="CP000687">
    <property type="protein sequence ID" value="ABY70360.1"/>
    <property type="molecule type" value="Genomic_DNA"/>
</dbReference>
<dbReference type="RefSeq" id="WP_005599308.1">
    <property type="nucleotide sequence ID" value="NC_010278.1"/>
</dbReference>
<dbReference type="SMR" id="B0BSU6"/>
<dbReference type="GeneID" id="48600067"/>
<dbReference type="KEGG" id="apj:APJL_1810"/>
<dbReference type="HOGENOM" id="CLU_065464_1_2_6"/>
<dbReference type="Proteomes" id="UP000008547">
    <property type="component" value="Chromosome"/>
</dbReference>
<dbReference type="GO" id="GO:0022625">
    <property type="term" value="C:cytosolic large ribosomal subunit"/>
    <property type="evidence" value="ECO:0007669"/>
    <property type="project" value="TreeGrafter"/>
</dbReference>
<dbReference type="GO" id="GO:0019843">
    <property type="term" value="F:rRNA binding"/>
    <property type="evidence" value="ECO:0007669"/>
    <property type="project" value="UniProtKB-UniRule"/>
</dbReference>
<dbReference type="GO" id="GO:0003735">
    <property type="term" value="F:structural constituent of ribosome"/>
    <property type="evidence" value="ECO:0007669"/>
    <property type="project" value="InterPro"/>
</dbReference>
<dbReference type="GO" id="GO:0002181">
    <property type="term" value="P:cytoplasmic translation"/>
    <property type="evidence" value="ECO:0007669"/>
    <property type="project" value="TreeGrafter"/>
</dbReference>
<dbReference type="FunFam" id="3.90.930.12:FF:000001">
    <property type="entry name" value="50S ribosomal protein L6"/>
    <property type="match status" value="1"/>
</dbReference>
<dbReference type="FunFam" id="3.90.930.12:FF:000002">
    <property type="entry name" value="50S ribosomal protein L6"/>
    <property type="match status" value="1"/>
</dbReference>
<dbReference type="Gene3D" id="3.90.930.12">
    <property type="entry name" value="Ribosomal protein L6, alpha-beta domain"/>
    <property type="match status" value="2"/>
</dbReference>
<dbReference type="HAMAP" id="MF_01365_B">
    <property type="entry name" value="Ribosomal_uL6_B"/>
    <property type="match status" value="1"/>
</dbReference>
<dbReference type="InterPro" id="IPR000702">
    <property type="entry name" value="Ribosomal_uL6-like"/>
</dbReference>
<dbReference type="InterPro" id="IPR036789">
    <property type="entry name" value="Ribosomal_uL6-like_a/b-dom_sf"/>
</dbReference>
<dbReference type="InterPro" id="IPR020040">
    <property type="entry name" value="Ribosomal_uL6_a/b-dom"/>
</dbReference>
<dbReference type="InterPro" id="IPR019906">
    <property type="entry name" value="Ribosomal_uL6_bac-type"/>
</dbReference>
<dbReference type="InterPro" id="IPR002358">
    <property type="entry name" value="Ribosomal_uL6_CS"/>
</dbReference>
<dbReference type="NCBIfam" id="TIGR03654">
    <property type="entry name" value="L6_bact"/>
    <property type="match status" value="1"/>
</dbReference>
<dbReference type="PANTHER" id="PTHR11655">
    <property type="entry name" value="60S/50S RIBOSOMAL PROTEIN L6/L9"/>
    <property type="match status" value="1"/>
</dbReference>
<dbReference type="PANTHER" id="PTHR11655:SF14">
    <property type="entry name" value="LARGE RIBOSOMAL SUBUNIT PROTEIN UL6M"/>
    <property type="match status" value="1"/>
</dbReference>
<dbReference type="Pfam" id="PF00347">
    <property type="entry name" value="Ribosomal_L6"/>
    <property type="match status" value="2"/>
</dbReference>
<dbReference type="PIRSF" id="PIRSF002162">
    <property type="entry name" value="Ribosomal_L6"/>
    <property type="match status" value="1"/>
</dbReference>
<dbReference type="PRINTS" id="PR00059">
    <property type="entry name" value="RIBOSOMALL6"/>
</dbReference>
<dbReference type="SUPFAM" id="SSF56053">
    <property type="entry name" value="Ribosomal protein L6"/>
    <property type="match status" value="2"/>
</dbReference>
<dbReference type="PROSITE" id="PS00525">
    <property type="entry name" value="RIBOSOMAL_L6_1"/>
    <property type="match status" value="1"/>
</dbReference>
<accession>B0BSU6</accession>
<organism>
    <name type="scientific">Actinobacillus pleuropneumoniae serotype 3 (strain JL03)</name>
    <dbReference type="NCBI Taxonomy" id="434271"/>
    <lineage>
        <taxon>Bacteria</taxon>
        <taxon>Pseudomonadati</taxon>
        <taxon>Pseudomonadota</taxon>
        <taxon>Gammaproteobacteria</taxon>
        <taxon>Pasteurellales</taxon>
        <taxon>Pasteurellaceae</taxon>
        <taxon>Actinobacillus</taxon>
    </lineage>
</organism>
<keyword id="KW-0687">Ribonucleoprotein</keyword>
<keyword id="KW-0689">Ribosomal protein</keyword>
<keyword id="KW-0694">RNA-binding</keyword>
<keyword id="KW-0699">rRNA-binding</keyword>